<sequence>MESSSSLKGSALGKLVVTSGLLHSSWSKILEIHNPPYSNHDPGLQVSKKKKDSGLEFQIHREEKFTLVVFSAPPICRSSSSDSTLLHVKDKENPFPFLCSENNPSFSLHTPAFNLFTSASTSLTYLKSELLQTLKSEKPVIITGAALGGSVASLYTLWLLETIEPTLKRPLCITFGSPLIGDASLQQILENSVRNSCFLHVVSAQTRIKMDFFKPFGTFLICFDSGCVCIEDHVAVTELLNGVHDSGLVDYSQVLNRLDQSMLSLADSRLIPEDVIKGIEKRAEMKNLRFDMMFKKLNDMKISMAYIEWYKKKCKEVKIGYYDRFKTQLAFPSKEFDINIKNHHKSELNRFWKSVVEEVERRPQSDASILKRRFLFSGNNYRRMIEPLDIAEYYLEGRKEYRTTGRSHHYVMLEKWFGMESILIEKERCKKRDLSDLLTFDSCFWAEVEDSLIVINQLNTTVGMRDDVREVLTRKLVEFEGYVWEIITKREVSPEIFLEESSFMKWWKEYKKIKGFNSSYLTEFMNTRKYESYGKSQ</sequence>
<dbReference type="EC" id="3.1.1.1"/>
<dbReference type="EMBL" id="DQ103714">
    <property type="protein sequence ID" value="AAZ15704.1"/>
    <property type="molecule type" value="mRNA"/>
</dbReference>
<dbReference type="EMBL" id="AL391146">
    <property type="protein sequence ID" value="CAC01812.1"/>
    <property type="status" value="ALT_SEQ"/>
    <property type="molecule type" value="Genomic_DNA"/>
</dbReference>
<dbReference type="EMBL" id="CP002688">
    <property type="protein sequence ID" value="AED92091.1"/>
    <property type="molecule type" value="Genomic_DNA"/>
</dbReference>
<dbReference type="EMBL" id="CP002688">
    <property type="protein sequence ID" value="AED92092.1"/>
    <property type="molecule type" value="Genomic_DNA"/>
</dbReference>
<dbReference type="EMBL" id="AY086301">
    <property type="protein sequence ID" value="AAM64373.1"/>
    <property type="molecule type" value="mRNA"/>
</dbReference>
<dbReference type="PIR" id="T51438">
    <property type="entry name" value="T51438"/>
</dbReference>
<dbReference type="RefSeq" id="NP_568307.3">
    <molecule id="Q4F883-1"/>
    <property type="nucleotide sequence ID" value="NM_121497.5"/>
</dbReference>
<dbReference type="RefSeq" id="NP_851039.1">
    <molecule id="Q4F883-2"/>
    <property type="nucleotide sequence ID" value="NM_180708.2"/>
</dbReference>
<dbReference type="PDB" id="4NFU">
    <property type="method" value="X-ray"/>
    <property type="resolution" value="2.21 A"/>
    <property type="chains" value="B=2-537"/>
</dbReference>
<dbReference type="PDB" id="7XJP">
    <property type="method" value="EM"/>
    <property type="resolution" value="2.71 A"/>
    <property type="chains" value="B=1-537"/>
</dbReference>
<dbReference type="PDB" id="8YL6">
    <property type="method" value="EM"/>
    <property type="resolution" value="3.10 A"/>
    <property type="chains" value="B=1-537"/>
</dbReference>
<dbReference type="PDB" id="8YL7">
    <property type="method" value="EM"/>
    <property type="resolution" value="3.10 A"/>
    <property type="chains" value="B=1-537"/>
</dbReference>
<dbReference type="PDB" id="8YN0">
    <property type="method" value="X-ray"/>
    <property type="resolution" value="2.49 A"/>
    <property type="chains" value="C/E=2-537"/>
</dbReference>
<dbReference type="PDB" id="8YN1">
    <property type="method" value="EM"/>
    <property type="resolution" value="3.09 A"/>
    <property type="chains" value="B=3-535"/>
</dbReference>
<dbReference type="PDBsum" id="4NFU"/>
<dbReference type="PDBsum" id="7XJP"/>
<dbReference type="PDBsum" id="8YL6"/>
<dbReference type="PDBsum" id="8YL7"/>
<dbReference type="PDBsum" id="8YN0"/>
<dbReference type="PDBsum" id="8YN1"/>
<dbReference type="EMDB" id="EMD-33233"/>
<dbReference type="EMDB" id="EMD-39383"/>
<dbReference type="EMDB" id="EMD-39384"/>
<dbReference type="EMDB" id="EMD-39411"/>
<dbReference type="SMR" id="Q4F883"/>
<dbReference type="BioGRID" id="16622">
    <property type="interactions" value="2"/>
</dbReference>
<dbReference type="ComplexPortal" id="CPX-1321">
    <property type="entry name" value="EDS1-SAG101 complex, variant EDS1"/>
</dbReference>
<dbReference type="ComplexPortal" id="CPX-1325">
    <property type="entry name" value="EDS1-PAD4-SAG101 complex, variant EDS1"/>
</dbReference>
<dbReference type="ComplexPortal" id="CPX-1617">
    <property type="entry name" value="EDS1-SAG101 complex, variant EDS1B"/>
</dbReference>
<dbReference type="ComplexPortal" id="CPX-1619">
    <property type="entry name" value="EDS1-PAD4-SAG101 complex, variant EDS1B"/>
</dbReference>
<dbReference type="FunCoup" id="Q4F883">
    <property type="interactions" value="204"/>
</dbReference>
<dbReference type="STRING" id="3702.Q4F883"/>
<dbReference type="ESTHER" id="arath-At5g14930">
    <property type="family name" value="Plant_lipase_EDS1-like"/>
</dbReference>
<dbReference type="iPTMnet" id="Q4F883"/>
<dbReference type="PaxDb" id="3702-AT5G14930.2"/>
<dbReference type="ProteomicsDB" id="234488">
    <molecule id="Q4F883-1"/>
</dbReference>
<dbReference type="EnsemblPlants" id="AT5G14930.1">
    <molecule id="Q4F883-2"/>
    <property type="protein sequence ID" value="AT5G14930.1"/>
    <property type="gene ID" value="AT5G14930"/>
</dbReference>
<dbReference type="EnsemblPlants" id="AT5G14930.2">
    <molecule id="Q4F883-1"/>
    <property type="protein sequence ID" value="AT5G14930.2"/>
    <property type="gene ID" value="AT5G14930"/>
</dbReference>
<dbReference type="GeneID" id="831345"/>
<dbReference type="Gramene" id="AT5G14930.1">
    <molecule id="Q4F883-2"/>
    <property type="protein sequence ID" value="AT5G14930.1"/>
    <property type="gene ID" value="AT5G14930"/>
</dbReference>
<dbReference type="Gramene" id="AT5G14930.2">
    <molecule id="Q4F883-1"/>
    <property type="protein sequence ID" value="AT5G14930.2"/>
    <property type="gene ID" value="AT5G14930"/>
</dbReference>
<dbReference type="KEGG" id="ath:AT5G14930"/>
<dbReference type="Araport" id="AT5G14930"/>
<dbReference type="TAIR" id="AT5G14930">
    <property type="gene designation" value="SAG101"/>
</dbReference>
<dbReference type="eggNOG" id="ENOG502QTKG">
    <property type="taxonomic scope" value="Eukaryota"/>
</dbReference>
<dbReference type="HOGENOM" id="CLU_016367_3_0_1"/>
<dbReference type="InParanoid" id="Q4F883"/>
<dbReference type="OMA" id="KISMAYI"/>
<dbReference type="PhylomeDB" id="Q4F883"/>
<dbReference type="BioCyc" id="ARA:AT5G14930-MONOMER"/>
<dbReference type="EvolutionaryTrace" id="Q4F883"/>
<dbReference type="PRO" id="PR:Q4F883"/>
<dbReference type="Proteomes" id="UP000006548">
    <property type="component" value="Chromosome 5"/>
</dbReference>
<dbReference type="ExpressionAtlas" id="Q4F883">
    <property type="expression patterns" value="baseline and differential"/>
</dbReference>
<dbReference type="GO" id="GO:0005737">
    <property type="term" value="C:cytoplasm"/>
    <property type="evidence" value="ECO:0000314"/>
    <property type="project" value="UniProtKB"/>
</dbReference>
<dbReference type="GO" id="GO:0106093">
    <property type="term" value="C:EDS1 disease-resistance complex"/>
    <property type="evidence" value="ECO:0000314"/>
    <property type="project" value="ComplexPortal"/>
</dbReference>
<dbReference type="GO" id="GO:0016020">
    <property type="term" value="C:membrane"/>
    <property type="evidence" value="ECO:0007669"/>
    <property type="project" value="UniProtKB-SubCell"/>
</dbReference>
<dbReference type="GO" id="GO:0005634">
    <property type="term" value="C:nucleus"/>
    <property type="evidence" value="ECO:0000314"/>
    <property type="project" value="UniProtKB"/>
</dbReference>
<dbReference type="GO" id="GO:0106435">
    <property type="term" value="F:carboxylesterase activity"/>
    <property type="evidence" value="ECO:0007669"/>
    <property type="project" value="UniProtKB-EC"/>
</dbReference>
<dbReference type="GO" id="GO:0052689">
    <property type="term" value="F:carboxylic ester hydrolase activity"/>
    <property type="evidence" value="ECO:0000314"/>
    <property type="project" value="TAIR"/>
</dbReference>
<dbReference type="GO" id="GO:0050829">
    <property type="term" value="P:defense response to Gram-negative bacterium"/>
    <property type="evidence" value="ECO:0000315"/>
    <property type="project" value="TAIR"/>
</dbReference>
<dbReference type="GO" id="GO:0060866">
    <property type="term" value="P:leaf abscission"/>
    <property type="evidence" value="ECO:0000315"/>
    <property type="project" value="TAIR"/>
</dbReference>
<dbReference type="GO" id="GO:0016042">
    <property type="term" value="P:lipid catabolic process"/>
    <property type="evidence" value="ECO:0007669"/>
    <property type="project" value="UniProtKB-KW"/>
</dbReference>
<dbReference type="GO" id="GO:0009626">
    <property type="term" value="P:plant-type hypersensitive response"/>
    <property type="evidence" value="ECO:0000303"/>
    <property type="project" value="ComplexPortal"/>
</dbReference>
<dbReference type="GO" id="GO:1900426">
    <property type="term" value="P:positive regulation of defense response to bacterium"/>
    <property type="evidence" value="ECO:0000315"/>
    <property type="project" value="UniProtKB"/>
</dbReference>
<dbReference type="GO" id="GO:1902290">
    <property type="term" value="P:positive regulation of defense response to oomycetes"/>
    <property type="evidence" value="ECO:0000315"/>
    <property type="project" value="UniProtKB"/>
</dbReference>
<dbReference type="GO" id="GO:0002230">
    <property type="term" value="P:positive regulation of defense response to virus by host"/>
    <property type="evidence" value="ECO:0000315"/>
    <property type="project" value="UniProtKB"/>
</dbReference>
<dbReference type="GO" id="GO:1900057">
    <property type="term" value="P:positive regulation of leaf senescence"/>
    <property type="evidence" value="ECO:0000315"/>
    <property type="project" value="UniProtKB"/>
</dbReference>
<dbReference type="GO" id="GO:0009862">
    <property type="term" value="P:systemic acquired resistance, salicylic acid mediated signaling pathway"/>
    <property type="evidence" value="ECO:0000315"/>
    <property type="project" value="ComplexPortal"/>
</dbReference>
<dbReference type="DisProt" id="DP02640"/>
<dbReference type="Gene3D" id="3.40.50.1820">
    <property type="entry name" value="alpha/beta hydrolase"/>
    <property type="match status" value="1"/>
</dbReference>
<dbReference type="InterPro" id="IPR029058">
    <property type="entry name" value="AB_hydrolase_fold"/>
</dbReference>
<dbReference type="InterPro" id="IPR041266">
    <property type="entry name" value="EDS1_EP"/>
</dbReference>
<dbReference type="InterPro" id="IPR002921">
    <property type="entry name" value="Fungal_lipase-type"/>
</dbReference>
<dbReference type="InterPro" id="IPR044603">
    <property type="entry name" value="SAG101-like"/>
</dbReference>
<dbReference type="PANTHER" id="PTHR46898:SF3">
    <property type="entry name" value="FUNGAL LIPASE-LIKE DOMAIN-CONTAINING PROTEIN"/>
    <property type="match status" value="1"/>
</dbReference>
<dbReference type="PANTHER" id="PTHR46898">
    <property type="entry name" value="SENESCENCE-ASSOCIATED CARBOXYLESTERASE 101"/>
    <property type="match status" value="1"/>
</dbReference>
<dbReference type="Pfam" id="PF18117">
    <property type="entry name" value="EDS1_EP"/>
    <property type="match status" value="1"/>
</dbReference>
<dbReference type="Pfam" id="PF01764">
    <property type="entry name" value="Lipase_3"/>
    <property type="match status" value="1"/>
</dbReference>
<dbReference type="SUPFAM" id="SSF53474">
    <property type="entry name" value="alpha/beta-Hydrolases"/>
    <property type="match status" value="1"/>
</dbReference>
<proteinExistence type="evidence at protein level"/>
<feature type="signal peptide" evidence="1">
    <location>
        <begin position="1"/>
        <end position="27"/>
    </location>
</feature>
<feature type="chain" id="PRO_0000423498" description="Senescence-associated carboxylesterase 101">
    <location>
        <begin position="28"/>
        <end position="537"/>
    </location>
</feature>
<feature type="transmembrane region" description="Helical" evidence="1">
    <location>
        <begin position="140"/>
        <end position="160"/>
    </location>
</feature>
<feature type="splice variant" id="VSP_047931" description="In isoform 2." evidence="9">
    <original>LL</original>
    <variation>VI</variation>
    <location>
        <begin position="130"/>
        <end position="131"/>
    </location>
</feature>
<feature type="splice variant" id="VSP_047932" description="In isoform 2." evidence="9">
    <location>
        <begin position="132"/>
        <end position="537"/>
    </location>
</feature>
<feature type="mutagenesis site" description="No effect on interaction with EDS1; when associated with A-21. No effect on interaction with EDS1; when associated with A-21 and A-141. Loss of interaction with EDS1; when associated with A-21; A-141 and A-306." evidence="8">
    <original>L</original>
    <variation>A</variation>
    <location>
        <position position="12"/>
    </location>
</feature>
<feature type="mutagenesis site" description="No effect on interaction with EDS1; when associated with A-12. No effect on interaction with EDS1; when associated with A-12 and A-141. Loss of interaction with EDS1; when associated with A-12; A-141 and A-306." evidence="8">
    <original>L</original>
    <variation>A</variation>
    <location>
        <position position="21"/>
    </location>
</feature>
<feature type="mutagenesis site" description="No effect on interaction with EDS1; when associated with A-12 and A-21. Loss of interaction with EDS1; when associated with A-12; A-21 and A-306." evidence="8">
    <original>I</original>
    <variation>A</variation>
    <location>
        <position position="141"/>
    </location>
</feature>
<feature type="mutagenesis site" description="Loss of interaction with EDS1; when associated with A-12; A-21 and A-141." evidence="8">
    <original>Y</original>
    <variation>A</variation>
    <location>
        <position position="306"/>
    </location>
</feature>
<feature type="sequence conflict" description="In Ref. 4; AAM64373." evidence="10" ref="4">
    <original>H</original>
    <variation>Q</variation>
    <location>
        <position position="40"/>
    </location>
</feature>
<feature type="helix" evidence="11">
    <location>
        <begin position="4"/>
        <end position="18"/>
    </location>
</feature>
<feature type="helix" evidence="11">
    <location>
        <begin position="21"/>
        <end position="33"/>
    </location>
</feature>
<feature type="helix" evidence="13">
    <location>
        <begin position="42"/>
        <end position="44"/>
    </location>
</feature>
<feature type="strand" evidence="11">
    <location>
        <begin position="56"/>
        <end position="61"/>
    </location>
</feature>
<feature type="strand" evidence="11">
    <location>
        <begin position="66"/>
        <end position="71"/>
    </location>
</feature>
<feature type="helix" evidence="11">
    <location>
        <begin position="77"/>
        <end position="79"/>
    </location>
</feature>
<feature type="strand" evidence="11">
    <location>
        <begin position="83"/>
        <end position="87"/>
    </location>
</feature>
<feature type="helix" evidence="11">
    <location>
        <begin position="96"/>
        <end position="98"/>
    </location>
</feature>
<feature type="strand" evidence="11">
    <location>
        <begin position="104"/>
        <end position="109"/>
    </location>
</feature>
<feature type="helix" evidence="11">
    <location>
        <begin position="110"/>
        <end position="117"/>
    </location>
</feature>
<feature type="helix" evidence="11">
    <location>
        <begin position="120"/>
        <end position="135"/>
    </location>
</feature>
<feature type="strand" evidence="11">
    <location>
        <begin position="140"/>
        <end position="145"/>
    </location>
</feature>
<feature type="helix" evidence="11">
    <location>
        <begin position="147"/>
        <end position="159"/>
    </location>
</feature>
<feature type="turn" evidence="11">
    <location>
        <begin position="160"/>
        <end position="162"/>
    </location>
</feature>
<feature type="strand" evidence="12">
    <location>
        <begin position="165"/>
        <end position="167"/>
    </location>
</feature>
<feature type="strand" evidence="11">
    <location>
        <begin position="171"/>
        <end position="176"/>
    </location>
</feature>
<feature type="helix" evidence="11">
    <location>
        <begin position="183"/>
        <end position="189"/>
    </location>
</feature>
<feature type="strand" evidence="12">
    <location>
        <begin position="190"/>
        <end position="192"/>
    </location>
</feature>
<feature type="helix" evidence="11">
    <location>
        <begin position="193"/>
        <end position="197"/>
    </location>
</feature>
<feature type="strand" evidence="11">
    <location>
        <begin position="198"/>
        <end position="203"/>
    </location>
</feature>
<feature type="strand" evidence="11">
    <location>
        <begin position="211"/>
        <end position="214"/>
    </location>
</feature>
<feature type="strand" evidence="11">
    <location>
        <begin position="217"/>
        <end position="223"/>
    </location>
</feature>
<feature type="strand" evidence="11">
    <location>
        <begin position="226"/>
        <end position="230"/>
    </location>
</feature>
<feature type="helix" evidence="11">
    <location>
        <begin position="233"/>
        <end position="240"/>
    </location>
</feature>
<feature type="strand" evidence="13">
    <location>
        <begin position="241"/>
        <end position="244"/>
    </location>
</feature>
<feature type="helix" evidence="11">
    <location>
        <begin position="251"/>
        <end position="262"/>
    </location>
</feature>
<feature type="helix" evidence="11">
    <location>
        <begin position="273"/>
        <end position="286"/>
    </location>
</feature>
<feature type="turn" evidence="11">
    <location>
        <begin position="287"/>
        <end position="294"/>
    </location>
</feature>
<feature type="helix" evidence="11">
    <location>
        <begin position="295"/>
        <end position="316"/>
    </location>
</feature>
<feature type="helix" evidence="11">
    <location>
        <begin position="321"/>
        <end position="330"/>
    </location>
</feature>
<feature type="helix" evidence="11">
    <location>
        <begin position="335"/>
        <end position="342"/>
    </location>
</feature>
<feature type="helix" evidence="11">
    <location>
        <begin position="344"/>
        <end position="361"/>
    </location>
</feature>
<feature type="helix" evidence="11">
    <location>
        <begin position="364"/>
        <end position="373"/>
    </location>
</feature>
<feature type="helix" evidence="11">
    <location>
        <begin position="375"/>
        <end position="395"/>
    </location>
</feature>
<feature type="helix" evidence="11">
    <location>
        <begin position="401"/>
        <end position="404"/>
    </location>
</feature>
<feature type="helix" evidence="11">
    <location>
        <begin position="408"/>
        <end position="417"/>
    </location>
</feature>
<feature type="strand" evidence="11">
    <location>
        <begin position="418"/>
        <end position="420"/>
    </location>
</feature>
<feature type="helix" evidence="11">
    <location>
        <begin position="421"/>
        <end position="428"/>
    </location>
</feature>
<feature type="turn" evidence="11">
    <location>
        <begin position="429"/>
        <end position="431"/>
    </location>
</feature>
<feature type="helix" evidence="11">
    <location>
        <begin position="444"/>
        <end position="460"/>
    </location>
</feature>
<feature type="helix" evidence="11">
    <location>
        <begin position="466"/>
        <end position="488"/>
    </location>
</feature>
<feature type="helix" evidence="11">
    <location>
        <begin position="494"/>
        <end position="497"/>
    </location>
</feature>
<feature type="helix" evidence="11">
    <location>
        <begin position="502"/>
        <end position="514"/>
    </location>
</feature>
<feature type="helix" evidence="11">
    <location>
        <begin position="520"/>
        <end position="526"/>
    </location>
</feature>
<feature type="helix" evidence="11">
    <location>
        <begin position="529"/>
        <end position="532"/>
    </location>
</feature>
<gene>
    <name type="primary">SAG101</name>
    <name type="ordered locus">At5g14930</name>
    <name type="ORF">F2G14.50</name>
</gene>
<name>SG101_ARATH</name>
<evidence type="ECO:0000255" key="1"/>
<evidence type="ECO:0000269" key="2">
    <source>
    </source>
</evidence>
<evidence type="ECO:0000269" key="3">
    <source>
    </source>
</evidence>
<evidence type="ECO:0000269" key="4">
    <source>
    </source>
</evidence>
<evidence type="ECO:0000269" key="5">
    <source>
    </source>
</evidence>
<evidence type="ECO:0000269" key="6">
    <source>
    </source>
</evidence>
<evidence type="ECO:0000269" key="7">
    <source>
    </source>
</evidence>
<evidence type="ECO:0000269" key="8">
    <source>
    </source>
</evidence>
<evidence type="ECO:0000303" key="9">
    <source ref="4"/>
</evidence>
<evidence type="ECO:0000305" key="10"/>
<evidence type="ECO:0007829" key="11">
    <source>
        <dbReference type="PDB" id="4NFU"/>
    </source>
</evidence>
<evidence type="ECO:0007829" key="12">
    <source>
        <dbReference type="PDB" id="7XJP"/>
    </source>
</evidence>
<evidence type="ECO:0007829" key="13">
    <source>
        <dbReference type="PDB" id="8YN0"/>
    </source>
</evidence>
<organism>
    <name type="scientific">Arabidopsis thaliana</name>
    <name type="common">Mouse-ear cress</name>
    <dbReference type="NCBI Taxonomy" id="3702"/>
    <lineage>
        <taxon>Eukaryota</taxon>
        <taxon>Viridiplantae</taxon>
        <taxon>Streptophyta</taxon>
        <taxon>Embryophyta</taxon>
        <taxon>Tracheophyta</taxon>
        <taxon>Spermatophyta</taxon>
        <taxon>Magnoliopsida</taxon>
        <taxon>eudicotyledons</taxon>
        <taxon>Gunneridae</taxon>
        <taxon>Pentapetalae</taxon>
        <taxon>rosids</taxon>
        <taxon>malvids</taxon>
        <taxon>Brassicales</taxon>
        <taxon>Brassicaceae</taxon>
        <taxon>Camelineae</taxon>
        <taxon>Arabidopsis</taxon>
    </lineage>
</organism>
<reference key="1">
    <citation type="journal article" date="2002" name="Plant Cell">
        <title>A gene encoding an acyl hydrolase is involved in leaf senescence in Arabidopsis.</title>
        <authorList>
            <person name="He Y."/>
            <person name="Gan S."/>
        </authorList>
    </citation>
    <scope>NUCLEOTIDE SEQUENCE [MRNA] (ISOFORM 1)</scope>
    <scope>FUNCTION</scope>
    <scope>DISRUPTION PHENOTYPE</scope>
    <scope>CATALYTIC ACTIVITY</scope>
    <scope>DEVELOPMENTAL STAGE</scope>
    <scope>TISSUE SPECIFICITY</scope>
    <source>
        <strain>cv. Columbia</strain>
    </source>
</reference>
<reference key="2">
    <citation type="journal article" date="2000" name="Nature">
        <title>Sequence and analysis of chromosome 5 of the plant Arabidopsis thaliana.</title>
        <authorList>
            <person name="Tabata S."/>
            <person name="Kaneko T."/>
            <person name="Nakamura Y."/>
            <person name="Kotani H."/>
            <person name="Kato T."/>
            <person name="Asamizu E."/>
            <person name="Miyajima N."/>
            <person name="Sasamoto S."/>
            <person name="Kimura T."/>
            <person name="Hosouchi T."/>
            <person name="Kawashima K."/>
            <person name="Kohara M."/>
            <person name="Matsumoto M."/>
            <person name="Matsuno A."/>
            <person name="Muraki A."/>
            <person name="Nakayama S."/>
            <person name="Nakazaki N."/>
            <person name="Naruo K."/>
            <person name="Okumura S."/>
            <person name="Shinpo S."/>
            <person name="Takeuchi C."/>
            <person name="Wada T."/>
            <person name="Watanabe A."/>
            <person name="Yamada M."/>
            <person name="Yasuda M."/>
            <person name="Sato S."/>
            <person name="de la Bastide M."/>
            <person name="Huang E."/>
            <person name="Spiegel L."/>
            <person name="Gnoj L."/>
            <person name="O'Shaughnessy A."/>
            <person name="Preston R."/>
            <person name="Habermann K."/>
            <person name="Murray J."/>
            <person name="Johnson D."/>
            <person name="Rohlfing T."/>
            <person name="Nelson J."/>
            <person name="Stoneking T."/>
            <person name="Pepin K."/>
            <person name="Spieth J."/>
            <person name="Sekhon M."/>
            <person name="Armstrong J."/>
            <person name="Becker M."/>
            <person name="Belter E."/>
            <person name="Cordum H."/>
            <person name="Cordes M."/>
            <person name="Courtney L."/>
            <person name="Courtney W."/>
            <person name="Dante M."/>
            <person name="Du H."/>
            <person name="Edwards J."/>
            <person name="Fryman J."/>
            <person name="Haakensen B."/>
            <person name="Lamar E."/>
            <person name="Latreille P."/>
            <person name="Leonard S."/>
            <person name="Meyer R."/>
            <person name="Mulvaney E."/>
            <person name="Ozersky P."/>
            <person name="Riley A."/>
            <person name="Strowmatt C."/>
            <person name="Wagner-McPherson C."/>
            <person name="Wollam A."/>
            <person name="Yoakum M."/>
            <person name="Bell M."/>
            <person name="Dedhia N."/>
            <person name="Parnell L."/>
            <person name="Shah R."/>
            <person name="Rodriguez M."/>
            <person name="Hoon See L."/>
            <person name="Vil D."/>
            <person name="Baker J."/>
            <person name="Kirchoff K."/>
            <person name="Toth K."/>
            <person name="King L."/>
            <person name="Bahret A."/>
            <person name="Miller B."/>
            <person name="Marra M.A."/>
            <person name="Martienssen R."/>
            <person name="McCombie W.R."/>
            <person name="Wilson R.K."/>
            <person name="Murphy G."/>
            <person name="Bancroft I."/>
            <person name="Volckaert G."/>
            <person name="Wambutt R."/>
            <person name="Duesterhoeft A."/>
            <person name="Stiekema W."/>
            <person name="Pohl T."/>
            <person name="Entian K.-D."/>
            <person name="Terryn N."/>
            <person name="Hartley N."/>
            <person name="Bent E."/>
            <person name="Johnson S."/>
            <person name="Langham S.-A."/>
            <person name="McCullagh B."/>
            <person name="Robben J."/>
            <person name="Grymonprez B."/>
            <person name="Zimmermann W."/>
            <person name="Ramsperger U."/>
            <person name="Wedler H."/>
            <person name="Balke K."/>
            <person name="Wedler E."/>
            <person name="Peters S."/>
            <person name="van Staveren M."/>
            <person name="Dirkse W."/>
            <person name="Mooijman P."/>
            <person name="Klein Lankhorst R."/>
            <person name="Weitzenegger T."/>
            <person name="Bothe G."/>
            <person name="Rose M."/>
            <person name="Hauf J."/>
            <person name="Berneiser S."/>
            <person name="Hempel S."/>
            <person name="Feldpausch M."/>
            <person name="Lamberth S."/>
            <person name="Villarroel R."/>
            <person name="Gielen J."/>
            <person name="Ardiles W."/>
            <person name="Bents O."/>
            <person name="Lemcke K."/>
            <person name="Kolesov G."/>
            <person name="Mayer K.F.X."/>
            <person name="Rudd S."/>
            <person name="Schoof H."/>
            <person name="Schueller C."/>
            <person name="Zaccaria P."/>
            <person name="Mewes H.-W."/>
            <person name="Bevan M."/>
            <person name="Fransz P.F."/>
        </authorList>
    </citation>
    <scope>NUCLEOTIDE SEQUENCE [LARGE SCALE GENOMIC DNA]</scope>
    <source>
        <strain>cv. Columbia</strain>
    </source>
</reference>
<reference key="3">
    <citation type="journal article" date="2017" name="Plant J.">
        <title>Araport11: a complete reannotation of the Arabidopsis thaliana reference genome.</title>
        <authorList>
            <person name="Cheng C.Y."/>
            <person name="Krishnakumar V."/>
            <person name="Chan A.P."/>
            <person name="Thibaud-Nissen F."/>
            <person name="Schobel S."/>
            <person name="Town C.D."/>
        </authorList>
    </citation>
    <scope>GENOME REANNOTATION</scope>
    <source>
        <strain>cv. Columbia</strain>
    </source>
</reference>
<reference key="4">
    <citation type="submission" date="2002-03" db="EMBL/GenBank/DDBJ databases">
        <title>Full-length cDNA from Arabidopsis thaliana.</title>
        <authorList>
            <person name="Brover V.V."/>
            <person name="Troukhan M.E."/>
            <person name="Alexandrov N.A."/>
            <person name="Lu Y.-P."/>
            <person name="Flavell R.B."/>
            <person name="Feldmann K.A."/>
        </authorList>
    </citation>
    <scope>NUCLEOTIDE SEQUENCE [LARGE SCALE MRNA] (ISOFORM 2)</scope>
</reference>
<reference key="5">
    <citation type="journal article" date="2005" name="Plant Cell">
        <title>Arabidopsis SENESCENCE-ASSOCIATED GENE101 stabilizes and signals within an ENHANCED DISEASE SUSCEPTIBILITY1 complex in plant innate immunity.</title>
        <authorList>
            <person name="Feys B.J."/>
            <person name="Wiermer M."/>
            <person name="Bhat R.A."/>
            <person name="Moisan L.J."/>
            <person name="Medina-Escobar N."/>
            <person name="Neu C."/>
            <person name="Cabral A."/>
            <person name="Parker J.E."/>
        </authorList>
    </citation>
    <scope>FUNCTION</scope>
    <scope>SUBCELLULAR LOCATION</scope>
    <scope>INTERACTION WITH EDS1</scope>
    <source>
        <strain>cv. Columbia</strain>
    </source>
</reference>
<reference key="6">
    <citation type="journal article" date="2009" name="Plant J.">
        <title>Epigenetic programming via histone methylation at WRKY53 controls leaf senescence in Arabidopsis thaliana.</title>
        <authorList>
            <person name="Ay N."/>
            <person name="Irmler K."/>
            <person name="Fischer A."/>
            <person name="Uhlemann R."/>
            <person name="Reuter G."/>
            <person name="Humbeck K."/>
        </authorList>
    </citation>
    <scope>INDUCTION BY SENESCENCE</scope>
    <scope>DEVELOPMENTAL STAGE</scope>
</reference>
<reference key="7">
    <citation type="journal article" date="2011" name="New Phytol.">
        <title>Different roles of Enhanced Disease Susceptibility1 (EDS1) bound to and dissociated from Phytoalexin Deficient4 (PAD4) in Arabidopsis immunity.</title>
        <authorList>
            <person name="Rietz S."/>
            <person name="Stamm A."/>
            <person name="Malonek S."/>
            <person name="Wagner S."/>
            <person name="Becker D."/>
            <person name="Medina-Escobar N."/>
            <person name="Vlot A.C."/>
            <person name="Feys B.J."/>
            <person name="Niefind K."/>
            <person name="Parker J.E."/>
        </authorList>
    </citation>
    <scope>FUNCTION</scope>
    <scope>INTERACTION WITH EDS1</scope>
</reference>
<reference key="8">
    <citation type="journal article" date="2011" name="PLoS Pathog.">
        <title>SAG101 forms a ternary complex with EDS1 and PAD4 and is required for resistance signaling against turnip crinkle virus.</title>
        <authorList>
            <person name="Zhu S."/>
            <person name="Jeong R.-D."/>
            <person name="Venugopal S.C."/>
            <person name="Lapchyk L."/>
            <person name="Navarre D."/>
            <person name="Kachroo A."/>
            <person name="Kachroo P."/>
        </authorList>
    </citation>
    <scope>FUNCTION</scope>
    <scope>SUBUNIT</scope>
    <scope>INTERACTION WITH EDS1</scope>
    <scope>SUBCELLULAR LOCATION</scope>
</reference>
<reference key="9">
    <citation type="journal article" date="2013" name="New Phytol.">
        <title>UDP-glucosyltransferase UGT84A2/BRT1 is required for Arabidopsis nonhost resistance to the Asian soybean rust pathogen Phakopsora pachyrhizi.</title>
        <authorList>
            <person name="Langenbach C."/>
            <person name="Campe R."/>
            <person name="Schaffrath U."/>
            <person name="Goellner K."/>
            <person name="Conrath U."/>
        </authorList>
    </citation>
    <scope>FUNCTION</scope>
</reference>
<reference key="10">
    <citation type="journal article" date="2011" name="Acta Crystallogr. F">
        <title>Crystallization and preliminary crystallographic analysis of Arabidopsis thaliana EDS1, a key component of plant immunity, in complex with its signalling partner SAG101.</title>
        <authorList>
            <person name="Wagner S."/>
            <person name="Rietz S."/>
            <person name="Parker J.E."/>
            <person name="Niefind K."/>
        </authorList>
    </citation>
    <scope>X-RAY CRYSTALLOGRAPHY (3.7 ANGSTROMS) IN COMPLEX WITH EDS1</scope>
    <scope>INTERACTION WITH EDS1</scope>
</reference>
<reference key="11">
    <citation type="journal article" date="2013" name="Cell Host Microbe">
        <title>Structural basis for signaling by exclusive EDS1 heteromeric complexes with SAG101 or PAD4 in plant innate immunity.</title>
        <authorList>
            <person name="Wagner S."/>
            <person name="Stuttmann J."/>
            <person name="Rietz S."/>
            <person name="Guerois R."/>
            <person name="Brunstein E."/>
            <person name="Bautor J."/>
            <person name="Niefind K."/>
            <person name="Parker J.E."/>
        </authorList>
    </citation>
    <scope>X-RAY CRYSTALLOGRAPHY (2.21 ANGSTROMS) OF 2-537 IN COMPLEX WITH EDS1</scope>
    <scope>MUTAGENESIS OF LEU-12; LEU-21; ILE-141 AND TYR-306</scope>
</reference>
<accession>Q4F883</accession>
<accession>F4K898</accession>
<accession>Q8LCZ8</accession>
<accession>Q9LFR2</accession>
<protein>
    <recommendedName>
        <fullName>Senescence-associated carboxylesterase 101</fullName>
        <ecNumber>3.1.1.1</ecNumber>
    </recommendedName>
</protein>
<keyword id="KW-0002">3D-structure</keyword>
<keyword id="KW-0025">Alternative splicing</keyword>
<keyword id="KW-0963">Cytoplasm</keyword>
<keyword id="KW-0378">Hydrolase</keyword>
<keyword id="KW-0442">Lipid degradation</keyword>
<keyword id="KW-0443">Lipid metabolism</keyword>
<keyword id="KW-0472">Membrane</keyword>
<keyword id="KW-0539">Nucleus</keyword>
<keyword id="KW-0611">Plant defense</keyword>
<keyword id="KW-1185">Reference proteome</keyword>
<keyword id="KW-0732">Signal</keyword>
<keyword id="KW-0812">Transmembrane</keyword>
<keyword id="KW-1133">Transmembrane helix</keyword>
<comment type="function">
    <text>Acyl hydrolase that triggers the leaf senescence onset. Can use triolein as substrate to produce oleic acids.</text>
</comment>
<comment type="function">
    <text evidence="6 7">Involved in the EDS1-dependent intrinsic and indispensable resistance signaling pathway; together with PAD4, required for programmed cell death triggered by RPS4 in response to avirulent pathogens (e.g. P.syringae pv. tomato strain DC3000 and H.parasitica isolates CALA2 and EMWA1) and in restricting the growth of virulent pathogens (e.g. H.parasitica isolates NOCO2 and P.syringae pv. tomato strain DC3000 avrRps4). Contributes in reinforcing the immune response around hypersensitive response foci (PubMed:21434927). Regulates the nuclear localization of EDS1. Essential for the RPP8/HRT-mediated resistance to the turnip crinkle virus (TCV). Involved in the post-invasion resistance to P.pachyrhizi in the mesophyll.</text>
</comment>
<comment type="catalytic activity">
    <reaction evidence="2">
        <text>a carboxylic ester + H2O = an alcohol + a carboxylate + H(+)</text>
        <dbReference type="Rhea" id="RHEA:21164"/>
        <dbReference type="ChEBI" id="CHEBI:15377"/>
        <dbReference type="ChEBI" id="CHEBI:15378"/>
        <dbReference type="ChEBI" id="CHEBI:29067"/>
        <dbReference type="ChEBI" id="CHEBI:30879"/>
        <dbReference type="ChEBI" id="CHEBI:33308"/>
        <dbReference type="EC" id="3.1.1.1"/>
    </reaction>
</comment>
<comment type="subunit">
    <text evidence="3 5 6 7 8">Part of a nuclear complex made of EDS1, PAD4 and SAG101, that can be redirected to the cytoplasm in the presence of an extranuclear form of EDS1 (PubMed:22072959). Interacts directly with EDS1.</text>
</comment>
<comment type="subcellular location">
    <subcellularLocation>
        <location evidence="10">Membrane</location>
        <topology evidence="10">Single-pass membrane protein</topology>
    </subcellularLocation>
    <subcellularLocation>
        <location evidence="7">Nucleus</location>
    </subcellularLocation>
    <subcellularLocation>
        <location evidence="7">Cytoplasm</location>
    </subcellularLocation>
    <text>Can move to the cytoplasm when in complex with PAD4 and EDS1.</text>
</comment>
<comment type="alternative products">
    <event type="alternative splicing"/>
    <isoform>
        <id>Q4F883-1</id>
        <name>1</name>
        <sequence type="displayed"/>
    </isoform>
    <isoform>
        <id>Q4F883-2</id>
        <name>2</name>
        <sequence type="described" ref="VSP_047931 VSP_047932"/>
    </isoform>
    <text>Additional isoforms seem to exist.</text>
</comment>
<comment type="tissue specificity">
    <text evidence="2">Expressed in senescing leaves.</text>
</comment>
<comment type="developmental stage">
    <text evidence="2 4">Not expressed until the onset of senescence in leaves.</text>
</comment>
<comment type="induction">
    <text evidence="4">Specifically induced during senescence via a complex epigenetic processe involving histone methylation.</text>
</comment>
<comment type="disruption phenotype">
    <text evidence="2">Delayed onset of leaf senescence (about 4 days later). Reduced resistance to both virulent and avirulent pathogens (Pseudomonas syringae pv. tomato and Hyaloperonospora parasitica).</text>
</comment>
<comment type="sequence caution" evidence="10">
    <conflict type="erroneous gene model prediction">
        <sequence resource="EMBL-CDS" id="CAC01812"/>
    </conflict>
</comment>